<comment type="function">
    <text evidence="1">Provides the precursors necessary for DNA synthesis. Catalyzes the biosynthesis of deoxyribonucleotides from the corresponding ribonucleotides (By similarity).</text>
</comment>
<comment type="catalytic activity">
    <reaction>
        <text>a 2'-deoxyribonucleoside 5'-diphosphate + [thioredoxin]-disulfide + H2O = a ribonucleoside 5'-diphosphate + [thioredoxin]-dithiol</text>
        <dbReference type="Rhea" id="RHEA:23252"/>
        <dbReference type="Rhea" id="RHEA-COMP:10698"/>
        <dbReference type="Rhea" id="RHEA-COMP:10700"/>
        <dbReference type="ChEBI" id="CHEBI:15377"/>
        <dbReference type="ChEBI" id="CHEBI:29950"/>
        <dbReference type="ChEBI" id="CHEBI:50058"/>
        <dbReference type="ChEBI" id="CHEBI:57930"/>
        <dbReference type="ChEBI" id="CHEBI:73316"/>
        <dbReference type="EC" id="1.17.4.1"/>
    </reaction>
</comment>
<comment type="cofactor">
    <cofactor evidence="1">
        <name>Fe cation</name>
        <dbReference type="ChEBI" id="CHEBI:24875"/>
    </cofactor>
    <text evidence="1">Binds 2 iron ions per subunit.</text>
</comment>
<comment type="subunit">
    <text evidence="1">Tetramer of two alpha and two beta subunits.</text>
</comment>
<comment type="similarity">
    <text evidence="2">Belongs to the ribonucleoside diphosphate reductase small chain family.</text>
</comment>
<comment type="caution">
    <text evidence="2">Seems to lack two of the iron-binding residues.</text>
</comment>
<evidence type="ECO:0000250" key="1"/>
<evidence type="ECO:0000305" key="2"/>
<keyword id="KW-0215">Deoxyribonucleotide synthesis</keyword>
<keyword id="KW-0408">Iron</keyword>
<keyword id="KW-0479">Metal-binding</keyword>
<keyword id="KW-0560">Oxidoreductase</keyword>
<keyword id="KW-1185">Reference proteome</keyword>
<accession>P47471</accession>
<accession>Q49443</accession>
<proteinExistence type="inferred from homology"/>
<protein>
    <recommendedName>
        <fullName>Ribonucleoside-diphosphate reductase subunit beta</fullName>
        <ecNumber>1.17.4.1</ecNumber>
    </recommendedName>
    <alternativeName>
        <fullName>Ribonucleotide reductase small subunit</fullName>
    </alternativeName>
</protein>
<dbReference type="EC" id="1.17.4.1"/>
<dbReference type="EMBL" id="L43967">
    <property type="protein sequence ID" value="AAC71450.1"/>
    <property type="molecule type" value="Genomic_DNA"/>
</dbReference>
<dbReference type="EMBL" id="U01739">
    <property type="protein sequence ID" value="AAD10549.1"/>
    <property type="molecule type" value="Genomic_DNA"/>
</dbReference>
<dbReference type="PIR" id="C64225">
    <property type="entry name" value="C64225"/>
</dbReference>
<dbReference type="RefSeq" id="WP_009885766.1">
    <property type="nucleotide sequence ID" value="NC_000908.2"/>
</dbReference>
<dbReference type="SMR" id="P47471"/>
<dbReference type="FunCoup" id="P47471">
    <property type="interactions" value="137"/>
</dbReference>
<dbReference type="STRING" id="243273.MG_229"/>
<dbReference type="GeneID" id="88282375"/>
<dbReference type="KEGG" id="mge:MG_229"/>
<dbReference type="eggNOG" id="COG0208">
    <property type="taxonomic scope" value="Bacteria"/>
</dbReference>
<dbReference type="HOGENOM" id="CLU_052495_0_0_14"/>
<dbReference type="InParanoid" id="P47471"/>
<dbReference type="OrthoDB" id="9766544at2"/>
<dbReference type="Proteomes" id="UP000000807">
    <property type="component" value="Chromosome"/>
</dbReference>
<dbReference type="GO" id="GO:0005971">
    <property type="term" value="C:ribonucleoside-diphosphate reductase complex"/>
    <property type="evidence" value="ECO:0007669"/>
    <property type="project" value="InterPro"/>
</dbReference>
<dbReference type="GO" id="GO:0046872">
    <property type="term" value="F:metal ion binding"/>
    <property type="evidence" value="ECO:0007669"/>
    <property type="project" value="UniProtKB-KW"/>
</dbReference>
<dbReference type="GO" id="GO:0004748">
    <property type="term" value="F:ribonucleoside-diphosphate reductase activity, thioredoxin disulfide as acceptor"/>
    <property type="evidence" value="ECO:0007669"/>
    <property type="project" value="UniProtKB-EC"/>
</dbReference>
<dbReference type="GO" id="GO:0009263">
    <property type="term" value="P:deoxyribonucleotide biosynthetic process"/>
    <property type="evidence" value="ECO:0007669"/>
    <property type="project" value="UniProtKB-KW"/>
</dbReference>
<dbReference type="CDD" id="cd01049">
    <property type="entry name" value="RNRR2"/>
    <property type="match status" value="1"/>
</dbReference>
<dbReference type="Gene3D" id="1.10.620.20">
    <property type="entry name" value="Ribonucleotide Reductase, subunit A"/>
    <property type="match status" value="1"/>
</dbReference>
<dbReference type="InterPro" id="IPR009078">
    <property type="entry name" value="Ferritin-like_SF"/>
</dbReference>
<dbReference type="InterPro" id="IPR012348">
    <property type="entry name" value="RNR-like"/>
</dbReference>
<dbReference type="InterPro" id="IPR026494">
    <property type="entry name" value="RNR_NrdF-like"/>
</dbReference>
<dbReference type="InterPro" id="IPR033909">
    <property type="entry name" value="RNR_small"/>
</dbReference>
<dbReference type="InterPro" id="IPR000358">
    <property type="entry name" value="RNR_small_fam"/>
</dbReference>
<dbReference type="NCBIfam" id="NF007182">
    <property type="entry name" value="PRK09614.1-1"/>
    <property type="match status" value="1"/>
</dbReference>
<dbReference type="NCBIfam" id="NF010572">
    <property type="entry name" value="PRK13965.1"/>
    <property type="match status" value="1"/>
</dbReference>
<dbReference type="NCBIfam" id="TIGR04171">
    <property type="entry name" value="RNR_1b_NrdF"/>
    <property type="match status" value="1"/>
</dbReference>
<dbReference type="PANTHER" id="PTHR23409">
    <property type="entry name" value="RIBONUCLEOSIDE-DIPHOSPHATE REDUCTASE SMALL CHAIN"/>
    <property type="match status" value="1"/>
</dbReference>
<dbReference type="PANTHER" id="PTHR23409:SF18">
    <property type="entry name" value="RIBONUCLEOSIDE-DIPHOSPHATE REDUCTASE SUBUNIT M2"/>
    <property type="match status" value="1"/>
</dbReference>
<dbReference type="Pfam" id="PF00268">
    <property type="entry name" value="Ribonuc_red_sm"/>
    <property type="match status" value="1"/>
</dbReference>
<dbReference type="SUPFAM" id="SSF47240">
    <property type="entry name" value="Ferritin-like"/>
    <property type="match status" value="1"/>
</dbReference>
<feature type="chain" id="PRO_0000190483" description="Ribonucleoside-diphosphate reductase subunit beta">
    <location>
        <begin position="1"/>
        <end position="340"/>
    </location>
</feature>
<feature type="active site" evidence="1">
    <location>
        <position position="126"/>
    </location>
</feature>
<feature type="binding site" evidence="1">
    <location>
        <position position="88"/>
    </location>
    <ligand>
        <name>Fe cation</name>
        <dbReference type="ChEBI" id="CHEBI:24875"/>
        <label>1</label>
    </ligand>
</feature>
<feature type="binding site" evidence="1">
    <location>
        <position position="122"/>
    </location>
    <ligand>
        <name>Fe cation</name>
        <dbReference type="ChEBI" id="CHEBI:24875"/>
        <label>1</label>
    </ligand>
</feature>
<feature type="binding site">
    <location>
        <position position="216"/>
    </location>
    <ligand>
        <name>Fe cation</name>
        <dbReference type="ChEBI" id="CHEBI:24875"/>
        <label>2</label>
    </ligand>
</feature>
<feature type="sequence conflict" description="In Ref. 2; AAD10549." evidence="2" ref="2">
    <original>AKQKEMKAFV</original>
    <variation>SKTKGDESIC</variation>
    <location>
        <begin position="234"/>
        <end position="243"/>
    </location>
</feature>
<name>RIR2_MYCGE</name>
<reference key="1">
    <citation type="journal article" date="1995" name="Science">
        <title>The minimal gene complement of Mycoplasma genitalium.</title>
        <authorList>
            <person name="Fraser C.M."/>
            <person name="Gocayne J.D."/>
            <person name="White O."/>
            <person name="Adams M.D."/>
            <person name="Clayton R.A."/>
            <person name="Fleischmann R.D."/>
            <person name="Bult C.J."/>
            <person name="Kerlavage A.R."/>
            <person name="Sutton G.G."/>
            <person name="Kelley J.M."/>
            <person name="Fritchman J.L."/>
            <person name="Weidman J.F."/>
            <person name="Small K.V."/>
            <person name="Sandusky M."/>
            <person name="Fuhrmann J.L."/>
            <person name="Nguyen D.T."/>
            <person name="Utterback T.R."/>
            <person name="Saudek D.M."/>
            <person name="Phillips C.A."/>
            <person name="Merrick J.M."/>
            <person name="Tomb J.-F."/>
            <person name="Dougherty B.A."/>
            <person name="Bott K.F."/>
            <person name="Hu P.-C."/>
            <person name="Lucier T.S."/>
            <person name="Peterson S.N."/>
            <person name="Smith H.O."/>
            <person name="Hutchison C.A. III"/>
            <person name="Venter J.C."/>
        </authorList>
    </citation>
    <scope>NUCLEOTIDE SEQUENCE [LARGE SCALE GENOMIC DNA]</scope>
    <source>
        <strain>ATCC 33530 / DSM 19775 / NCTC 10195 / G37</strain>
    </source>
</reference>
<reference key="2">
    <citation type="journal article" date="1993" name="J. Bacteriol.">
        <title>A survey of the Mycoplasma genitalium genome by using random sequencing.</title>
        <authorList>
            <person name="Peterson S.N."/>
            <person name="Hu P.-C."/>
            <person name="Bott K.F."/>
            <person name="Hutchison C.A. III"/>
        </authorList>
    </citation>
    <scope>NUCLEOTIDE SEQUENCE [GENOMIC DNA] OF 234-340</scope>
    <source>
        <strain>ATCC 33530 / DSM 19775 / NCTC 10195 / G37</strain>
    </source>
</reference>
<gene>
    <name type="primary">nrdF</name>
    <name type="ordered locus">MG229</name>
</gene>
<organism>
    <name type="scientific">Mycoplasma genitalium (strain ATCC 33530 / DSM 19775 / NCTC 10195 / G37)</name>
    <name type="common">Mycoplasmoides genitalium</name>
    <dbReference type="NCBI Taxonomy" id="243273"/>
    <lineage>
        <taxon>Bacteria</taxon>
        <taxon>Bacillati</taxon>
        <taxon>Mycoplasmatota</taxon>
        <taxon>Mycoplasmoidales</taxon>
        <taxon>Mycoplasmoidaceae</taxon>
        <taxon>Mycoplasmoides</taxon>
    </lineage>
</organism>
<sequence length="340" mass="39152">MAANNKKYFLESFSPLGYVKNNFQGNLRSVNWNLVDDEKDLEVWNRIVQNFWLPEKIPVSNDIPSWKKLSKDWQDLITKTFTGLTLLDTIQATIGDICQIDHALTDHEQVIYANFAFMVGVHARSYGTIFSTLCTSEQINAAHEWVVNTESLQKRAKALIPYYTGNDPLKSKVAAALMPGFLLYGGFYLPFYLSSRKQLPNTSDIIRLILRDKVIHNYYSGYKYQRKLEKLPLAKQKEMKAFVFELMYRLIELEKDYLKELYEGFGIVDDAIKFSVYNAGKFLQNLGYDSPFTAAETRIKPEIFAQLSARADENHDFFSGNGSSYVMGVSEETNDDDWNF</sequence>